<sequence length="331" mass="37587">MEIINGPVLPRYAAPATGALTSDAKISGQLLRRVHLRRRACGLQGDHYRAARRFFGFPSERHARSGWVWPVYCSYGSSSDGDGAAAADYDASGEEFVNSSVMEAVELRSVSDGFVIKMRDGKNLRCVQNNPRVLRLRDSAPHHAIVLKMEDGSDLLLPIIVMETPSIMLLAALRNIRIPRPTIYNVVKEMTERMGYAVRLVRITEMVHDAYYSRLYLAKIGNEEETISLDLKPSDAINIAFRCKVPIQVNRRIAYNNGLKVVQPTPSESYVSSDQFQYTRLDRPDDQPCFEAQEFDLVRNMLVAAVEERYKDAAQYRDQLFMFRAKKKNMI</sequence>
<comment type="function">
    <text evidence="1">Bifunctional nuclease with both RNase and DNase activities. Involved in basal defense response. Participates in abscisic acid-derived callose deposition following infection by a necrotrophic pathogen.</text>
</comment>
<comment type="subcellular location">
    <subcellularLocation>
        <location evidence="1">Nucleus</location>
    </subcellularLocation>
</comment>
<comment type="induction">
    <text evidence="1">Up-regulated by wounding, insect and fungal treatments, abscisic acid, etephon, salicylic acid and methyl jasmonate.</text>
</comment>
<comment type="similarity">
    <text evidence="2">Belongs to the bifunctional nuclease family.</text>
</comment>
<name>BBD_ORYMI</name>
<dbReference type="EC" id="3.1.-.-"/>
<dbReference type="EMBL" id="DQ872164">
    <property type="protein sequence ID" value="ABI79452.1"/>
    <property type="molecule type" value="mRNA"/>
</dbReference>
<dbReference type="SMR" id="Q09LL3"/>
<dbReference type="GO" id="GO:0005634">
    <property type="term" value="C:nucleus"/>
    <property type="evidence" value="ECO:0007669"/>
    <property type="project" value="UniProtKB-SubCell"/>
</dbReference>
<dbReference type="GO" id="GO:0030891">
    <property type="term" value="C:VCB complex"/>
    <property type="evidence" value="ECO:0007669"/>
    <property type="project" value="TreeGrafter"/>
</dbReference>
<dbReference type="GO" id="GO:0004518">
    <property type="term" value="F:nuclease activity"/>
    <property type="evidence" value="ECO:0007669"/>
    <property type="project" value="UniProtKB-KW"/>
</dbReference>
<dbReference type="GO" id="GO:0016567">
    <property type="term" value="P:protein ubiquitination"/>
    <property type="evidence" value="ECO:0007669"/>
    <property type="project" value="TreeGrafter"/>
</dbReference>
<dbReference type="Gene3D" id="3.10.690.10">
    <property type="entry name" value="Bifunctional nuclease domain"/>
    <property type="match status" value="1"/>
</dbReference>
<dbReference type="InterPro" id="IPR036104">
    <property type="entry name" value="BFN_sf"/>
</dbReference>
<dbReference type="InterPro" id="IPR003729">
    <property type="entry name" value="Bi_nuclease_dom"/>
</dbReference>
<dbReference type="PANTHER" id="PTHR15160:SF13">
    <property type="entry name" value="BIFUNCTIONAL NUCLEASE 1"/>
    <property type="match status" value="1"/>
</dbReference>
<dbReference type="PANTHER" id="PTHR15160">
    <property type="entry name" value="VON HIPPEL-LINDAU PROTEIN"/>
    <property type="match status" value="1"/>
</dbReference>
<dbReference type="Pfam" id="PF02577">
    <property type="entry name" value="BFN_dom"/>
    <property type="match status" value="1"/>
</dbReference>
<dbReference type="SUPFAM" id="SSF103256">
    <property type="entry name" value="Hypothetical protein TM0160"/>
    <property type="match status" value="1"/>
</dbReference>
<dbReference type="PROSITE" id="PS51658">
    <property type="entry name" value="BFN"/>
    <property type="match status" value="1"/>
</dbReference>
<protein>
    <recommendedName>
        <fullName>Bifunctional nuclease</fullName>
        <shortName>OmBBD</shortName>
        <ecNumber>3.1.-.-</ecNumber>
    </recommendedName>
</protein>
<accession>Q09LL3</accession>
<feature type="chain" id="PRO_0000419547" description="Bifunctional nuclease">
    <location>
        <begin position="1"/>
        <end position="331"/>
    </location>
</feature>
<feature type="domain" description="BFN">
    <location>
        <begin position="126"/>
        <end position="261"/>
    </location>
</feature>
<feature type="domain" description="UVR">
    <location>
        <begin position="291"/>
        <end position="326"/>
    </location>
</feature>
<reference key="1">
    <citation type="journal article" date="2010" name="Plant Physiol.">
        <title>Novel bifunctional nucleases, OmBBD and AtBBD1, are involved in abscisic acid-mediated callose deposition in Arabidopsis.</title>
        <authorList>
            <person name="You M.K."/>
            <person name="Shin H.Y."/>
            <person name="Kim Y.J."/>
            <person name="Ok S.H."/>
            <person name="Cho S.K."/>
            <person name="Jeung J.U."/>
            <person name="Yoo S.D."/>
            <person name="Kim J.K."/>
            <person name="Shin J.S."/>
        </authorList>
    </citation>
    <scope>NUCLEOTIDE SEQUENCE [MRNA]</scope>
    <scope>FUNCTION</scope>
    <scope>INDUCTION</scope>
    <scope>SUBCELLULAR LOCATION</scope>
</reference>
<keyword id="KW-0378">Hydrolase</keyword>
<keyword id="KW-0540">Nuclease</keyword>
<keyword id="KW-0539">Nucleus</keyword>
<proteinExistence type="evidence at transcript level"/>
<evidence type="ECO:0000269" key="1">
    <source>
    </source>
</evidence>
<evidence type="ECO:0000305" key="2"/>
<organism>
    <name type="scientific">Oryza minuta</name>
    <dbReference type="NCBI Taxonomy" id="63629"/>
    <lineage>
        <taxon>Eukaryota</taxon>
        <taxon>Viridiplantae</taxon>
        <taxon>Streptophyta</taxon>
        <taxon>Embryophyta</taxon>
        <taxon>Tracheophyta</taxon>
        <taxon>Spermatophyta</taxon>
        <taxon>Magnoliopsida</taxon>
        <taxon>Liliopsida</taxon>
        <taxon>Poales</taxon>
        <taxon>Poaceae</taxon>
        <taxon>BOP clade</taxon>
        <taxon>Oryzoideae</taxon>
        <taxon>Oryzeae</taxon>
        <taxon>Oryzinae</taxon>
        <taxon>Oryza</taxon>
    </lineage>
</organism>
<gene>
    <name type="primary">BBD</name>
</gene>